<evidence type="ECO:0000305" key="1"/>
<comment type="similarity">
    <text evidence="1">Belongs to the HNH nuclease family.</text>
</comment>
<dbReference type="EC" id="3.1.-.-"/>
<dbReference type="EMBL" id="AL009126">
    <property type="protein sequence ID" value="CAB13951.1"/>
    <property type="molecule type" value="Genomic_DNA"/>
</dbReference>
<dbReference type="RefSeq" id="NP_389941.1">
    <property type="nucleotide sequence ID" value="NC_000964.3"/>
</dbReference>
<dbReference type="RefSeq" id="WP_010886543.1">
    <property type="nucleotide sequence ID" value="NZ_OZ025638.1"/>
</dbReference>
<dbReference type="FunCoup" id="O34581">
    <property type="interactions" value="7"/>
</dbReference>
<dbReference type="STRING" id="224308.BSU20590"/>
<dbReference type="PaxDb" id="224308-BSU20590"/>
<dbReference type="EnsemblBacteria" id="CAB13951">
    <property type="protein sequence ID" value="CAB13951"/>
    <property type="gene ID" value="BSU_20590"/>
</dbReference>
<dbReference type="GeneID" id="939974"/>
<dbReference type="KEGG" id="bsu:BSU20590"/>
<dbReference type="PATRIC" id="fig|224308.43.peg.2167"/>
<dbReference type="InParanoid" id="O34581"/>
<dbReference type="OrthoDB" id="2666697at2"/>
<dbReference type="BioCyc" id="BSUB:BSU20590-MONOMER"/>
<dbReference type="Proteomes" id="UP000001570">
    <property type="component" value="Chromosome"/>
</dbReference>
<dbReference type="GO" id="GO:0004519">
    <property type="term" value="F:endonuclease activity"/>
    <property type="evidence" value="ECO:0007669"/>
    <property type="project" value="UniProtKB-KW"/>
</dbReference>
<dbReference type="GO" id="GO:0003676">
    <property type="term" value="F:nucleic acid binding"/>
    <property type="evidence" value="ECO:0007669"/>
    <property type="project" value="InterPro"/>
</dbReference>
<dbReference type="GO" id="GO:0008270">
    <property type="term" value="F:zinc ion binding"/>
    <property type="evidence" value="ECO:0007669"/>
    <property type="project" value="InterPro"/>
</dbReference>
<dbReference type="CDD" id="cd00085">
    <property type="entry name" value="HNHc"/>
    <property type="match status" value="1"/>
</dbReference>
<dbReference type="Gene3D" id="1.10.30.50">
    <property type="match status" value="1"/>
</dbReference>
<dbReference type="InterPro" id="IPR002711">
    <property type="entry name" value="HNH"/>
</dbReference>
<dbReference type="InterPro" id="IPR003615">
    <property type="entry name" value="HNH_nuc"/>
</dbReference>
<dbReference type="Pfam" id="PF01844">
    <property type="entry name" value="HNH"/>
    <property type="match status" value="1"/>
</dbReference>
<dbReference type="SMART" id="SM00507">
    <property type="entry name" value="HNHc"/>
    <property type="match status" value="1"/>
</dbReference>
<keyword id="KW-0255">Endonuclease</keyword>
<keyword id="KW-0378">Hydrolase</keyword>
<keyword id="KW-0540">Nuclease</keyword>
<keyword id="KW-1185">Reference proteome</keyword>
<organism>
    <name type="scientific">Bacillus subtilis (strain 168)</name>
    <dbReference type="NCBI Taxonomy" id="224308"/>
    <lineage>
        <taxon>Bacteria</taxon>
        <taxon>Bacillati</taxon>
        <taxon>Bacillota</taxon>
        <taxon>Bacilli</taxon>
        <taxon>Bacillales</taxon>
        <taxon>Bacillaceae</taxon>
        <taxon>Bacillus</taxon>
    </lineage>
</organism>
<accession>O34581</accession>
<reference key="1">
    <citation type="journal article" date="1997" name="Nature">
        <title>The complete genome sequence of the Gram-positive bacterium Bacillus subtilis.</title>
        <authorList>
            <person name="Kunst F."/>
            <person name="Ogasawara N."/>
            <person name="Moszer I."/>
            <person name="Albertini A.M."/>
            <person name="Alloni G."/>
            <person name="Azevedo V."/>
            <person name="Bertero M.G."/>
            <person name="Bessieres P."/>
            <person name="Bolotin A."/>
            <person name="Borchert S."/>
            <person name="Borriss R."/>
            <person name="Boursier L."/>
            <person name="Brans A."/>
            <person name="Braun M."/>
            <person name="Brignell S.C."/>
            <person name="Bron S."/>
            <person name="Brouillet S."/>
            <person name="Bruschi C.V."/>
            <person name="Caldwell B."/>
            <person name="Capuano V."/>
            <person name="Carter N.M."/>
            <person name="Choi S.-K."/>
            <person name="Codani J.-J."/>
            <person name="Connerton I.F."/>
            <person name="Cummings N.J."/>
            <person name="Daniel R.A."/>
            <person name="Denizot F."/>
            <person name="Devine K.M."/>
            <person name="Duesterhoeft A."/>
            <person name="Ehrlich S.D."/>
            <person name="Emmerson P.T."/>
            <person name="Entian K.-D."/>
            <person name="Errington J."/>
            <person name="Fabret C."/>
            <person name="Ferrari E."/>
            <person name="Foulger D."/>
            <person name="Fritz C."/>
            <person name="Fujita M."/>
            <person name="Fujita Y."/>
            <person name="Fuma S."/>
            <person name="Galizzi A."/>
            <person name="Galleron N."/>
            <person name="Ghim S.-Y."/>
            <person name="Glaser P."/>
            <person name="Goffeau A."/>
            <person name="Golightly E.J."/>
            <person name="Grandi G."/>
            <person name="Guiseppi G."/>
            <person name="Guy B.J."/>
            <person name="Haga K."/>
            <person name="Haiech J."/>
            <person name="Harwood C.R."/>
            <person name="Henaut A."/>
            <person name="Hilbert H."/>
            <person name="Holsappel S."/>
            <person name="Hosono S."/>
            <person name="Hullo M.-F."/>
            <person name="Itaya M."/>
            <person name="Jones L.-M."/>
            <person name="Joris B."/>
            <person name="Karamata D."/>
            <person name="Kasahara Y."/>
            <person name="Klaerr-Blanchard M."/>
            <person name="Klein C."/>
            <person name="Kobayashi Y."/>
            <person name="Koetter P."/>
            <person name="Koningstein G."/>
            <person name="Krogh S."/>
            <person name="Kumano M."/>
            <person name="Kurita K."/>
            <person name="Lapidus A."/>
            <person name="Lardinois S."/>
            <person name="Lauber J."/>
            <person name="Lazarevic V."/>
            <person name="Lee S.-M."/>
            <person name="Levine A."/>
            <person name="Liu H."/>
            <person name="Masuda S."/>
            <person name="Mauel C."/>
            <person name="Medigue C."/>
            <person name="Medina N."/>
            <person name="Mellado R.P."/>
            <person name="Mizuno M."/>
            <person name="Moestl D."/>
            <person name="Nakai S."/>
            <person name="Noback M."/>
            <person name="Noone D."/>
            <person name="O'Reilly M."/>
            <person name="Ogawa K."/>
            <person name="Ogiwara A."/>
            <person name="Oudega B."/>
            <person name="Park S.-H."/>
            <person name="Parro V."/>
            <person name="Pohl T.M."/>
            <person name="Portetelle D."/>
            <person name="Porwollik S."/>
            <person name="Prescott A.M."/>
            <person name="Presecan E."/>
            <person name="Pujic P."/>
            <person name="Purnelle B."/>
            <person name="Rapoport G."/>
            <person name="Rey M."/>
            <person name="Reynolds S."/>
            <person name="Rieger M."/>
            <person name="Rivolta C."/>
            <person name="Rocha E."/>
            <person name="Roche B."/>
            <person name="Rose M."/>
            <person name="Sadaie Y."/>
            <person name="Sato T."/>
            <person name="Scanlan E."/>
            <person name="Schleich S."/>
            <person name="Schroeter R."/>
            <person name="Scoffone F."/>
            <person name="Sekiguchi J."/>
            <person name="Sekowska A."/>
            <person name="Seror S.J."/>
            <person name="Serror P."/>
            <person name="Shin B.-S."/>
            <person name="Soldo B."/>
            <person name="Sorokin A."/>
            <person name="Tacconi E."/>
            <person name="Takagi T."/>
            <person name="Takahashi H."/>
            <person name="Takemaru K."/>
            <person name="Takeuchi M."/>
            <person name="Tamakoshi A."/>
            <person name="Tanaka T."/>
            <person name="Terpstra P."/>
            <person name="Tognoni A."/>
            <person name="Tosato V."/>
            <person name="Uchiyama S."/>
            <person name="Vandenbol M."/>
            <person name="Vannier F."/>
            <person name="Vassarotti A."/>
            <person name="Viari A."/>
            <person name="Wambutt R."/>
            <person name="Wedler E."/>
            <person name="Wedler H."/>
            <person name="Weitzenegger T."/>
            <person name="Winters P."/>
            <person name="Wipat A."/>
            <person name="Yamamoto H."/>
            <person name="Yamane K."/>
            <person name="Yasumoto K."/>
            <person name="Yata K."/>
            <person name="Yoshida K."/>
            <person name="Yoshikawa H.-F."/>
            <person name="Zumstein E."/>
            <person name="Yoshikawa H."/>
            <person name="Danchin A."/>
        </authorList>
    </citation>
    <scope>NUCLEOTIDE SEQUENCE [LARGE SCALE GENOMIC DNA]</scope>
    <source>
        <strain>168</strain>
    </source>
</reference>
<sequence>MDSKKHKIINGYYHKNCISCKSWLPATEENFYSVKKNKDGLHSYCKACVLKKAKESMLKNYDKQLERMRERNLLPGMKEAKKKYNSSLKKKKTQQIWQEKNKLKLKNYRLQRDAHKKHNITDVQWQKCKDYFNNKCSYCGLKIEDHKILFKGTYIQSDFHKEHVDHKGANDISNCIPACKSCNSSKHDFAFEEWYNSSNKNFSSERLLKIKEWLNRFKEERQDSEWRTKG</sequence>
<feature type="chain" id="PRO_0000389007" description="SPbeta prophage-derived putative HNH endonuclease YoqL">
    <location>
        <begin position="1"/>
        <end position="230"/>
    </location>
</feature>
<feature type="domain" description="HNH">
    <location>
        <begin position="136"/>
        <end position="188"/>
    </location>
</feature>
<proteinExistence type="inferred from homology"/>
<name>YOQL_BACSU</name>
<gene>
    <name type="primary">yoqL</name>
    <name type="ordered locus">BSU20590</name>
</gene>
<protein>
    <recommendedName>
        <fullName>SPbeta prophage-derived putative HNH endonuclease YoqL</fullName>
        <ecNumber>3.1.-.-</ecNumber>
    </recommendedName>
</protein>